<dbReference type="EMBL" id="AF032668">
    <property type="protein sequence ID" value="AAC01580.1"/>
    <property type="status" value="ALT_INIT"/>
    <property type="molecule type" value="mRNA"/>
</dbReference>
<dbReference type="PIR" id="T09221">
    <property type="entry name" value="T09221"/>
</dbReference>
<dbReference type="RefSeq" id="NP_062150.2">
    <property type="nucleotide sequence ID" value="NM_019277.2"/>
</dbReference>
<dbReference type="SMR" id="O54923"/>
<dbReference type="CORUM" id="O54923"/>
<dbReference type="FunCoup" id="O54923">
    <property type="interactions" value="1075"/>
</dbReference>
<dbReference type="STRING" id="10116.ENSRNOP00000051630"/>
<dbReference type="CarbonylDB" id="O54923"/>
<dbReference type="iPTMnet" id="O54923"/>
<dbReference type="PhosphoSitePlus" id="O54923"/>
<dbReference type="jPOST" id="O54923"/>
<dbReference type="PaxDb" id="10116-ENSRNOP00000051630"/>
<dbReference type="GeneID" id="50556"/>
<dbReference type="KEGG" id="rno:50556"/>
<dbReference type="AGR" id="RGD:3653"/>
<dbReference type="CTD" id="54536"/>
<dbReference type="RGD" id="3653">
    <property type="gene designation" value="Exoc6"/>
</dbReference>
<dbReference type="eggNOG" id="KOG2176">
    <property type="taxonomic scope" value="Eukaryota"/>
</dbReference>
<dbReference type="InParanoid" id="O54923"/>
<dbReference type="OrthoDB" id="26492at9989"/>
<dbReference type="PhylomeDB" id="O54923"/>
<dbReference type="Reactome" id="R-RNO-264876">
    <property type="pathway name" value="Insulin processing"/>
</dbReference>
<dbReference type="Reactome" id="R-RNO-5620916">
    <property type="pathway name" value="VxPx cargo-targeting to cilium"/>
</dbReference>
<dbReference type="PRO" id="PR:O54923"/>
<dbReference type="Proteomes" id="UP000002494">
    <property type="component" value="Unplaced"/>
</dbReference>
<dbReference type="GO" id="GO:0000145">
    <property type="term" value="C:exocyst"/>
    <property type="evidence" value="ECO:0000318"/>
    <property type="project" value="GO_Central"/>
</dbReference>
<dbReference type="GO" id="GO:0090543">
    <property type="term" value="C:Flemming body"/>
    <property type="evidence" value="ECO:0007669"/>
    <property type="project" value="UniProtKB-SubCell"/>
</dbReference>
<dbReference type="GO" id="GO:0030426">
    <property type="term" value="C:growth cone"/>
    <property type="evidence" value="ECO:0007669"/>
    <property type="project" value="UniProtKB-SubCell"/>
</dbReference>
<dbReference type="GO" id="GO:0048471">
    <property type="term" value="C:perinuclear region of cytoplasm"/>
    <property type="evidence" value="ECO:0007669"/>
    <property type="project" value="UniProtKB-SubCell"/>
</dbReference>
<dbReference type="GO" id="GO:0030218">
    <property type="term" value="P:erythrocyte differentiation"/>
    <property type="evidence" value="ECO:0000266"/>
    <property type="project" value="RGD"/>
</dbReference>
<dbReference type="GO" id="GO:0006887">
    <property type="term" value="P:exocytosis"/>
    <property type="evidence" value="ECO:0000318"/>
    <property type="project" value="GO_Central"/>
</dbReference>
<dbReference type="GO" id="GO:0006893">
    <property type="term" value="P:Golgi to plasma membrane transport"/>
    <property type="evidence" value="ECO:0000318"/>
    <property type="project" value="GO_Central"/>
</dbReference>
<dbReference type="GO" id="GO:0006886">
    <property type="term" value="P:intracellular protein transport"/>
    <property type="evidence" value="ECO:0007669"/>
    <property type="project" value="InterPro"/>
</dbReference>
<dbReference type="GO" id="GO:0090522">
    <property type="term" value="P:vesicle tethering involved in exocytosis"/>
    <property type="evidence" value="ECO:0007669"/>
    <property type="project" value="InterPro"/>
</dbReference>
<dbReference type="FunFam" id="1.10.357.30:FF:000001">
    <property type="entry name" value="Exocyst complex component"/>
    <property type="match status" value="1"/>
</dbReference>
<dbReference type="FunFam" id="1.20.58.670:FF:000001">
    <property type="entry name" value="Exocyst complex component"/>
    <property type="match status" value="1"/>
</dbReference>
<dbReference type="Gene3D" id="1.20.58.670">
    <property type="entry name" value="Dsl1p vesicle tethering complex, Tip20p subunit, domain D"/>
    <property type="match status" value="1"/>
</dbReference>
<dbReference type="Gene3D" id="1.10.357.30">
    <property type="entry name" value="Exocyst complex subunit Sec15 C-terminal domain, N-terminal subdomain"/>
    <property type="match status" value="1"/>
</dbReference>
<dbReference type="InterPro" id="IPR007225">
    <property type="entry name" value="EXOC6/Sec15"/>
</dbReference>
<dbReference type="InterPro" id="IPR046361">
    <property type="entry name" value="EXOC6/Sec15_C"/>
</dbReference>
<dbReference type="InterPro" id="IPR042045">
    <property type="entry name" value="EXOC6/Sec15_C_dom1"/>
</dbReference>
<dbReference type="InterPro" id="IPR048359">
    <property type="entry name" value="EXOC6_Sec15_N"/>
</dbReference>
<dbReference type="InterPro" id="IPR042044">
    <property type="entry name" value="EXOC6PINT-1/Sec15/Tip20_C_dom2"/>
</dbReference>
<dbReference type="PANTHER" id="PTHR12702:SF2">
    <property type="entry name" value="EXOCYST COMPLEX COMPONENT 6"/>
    <property type="match status" value="1"/>
</dbReference>
<dbReference type="PANTHER" id="PTHR12702">
    <property type="entry name" value="SEC15"/>
    <property type="match status" value="1"/>
</dbReference>
<dbReference type="Pfam" id="PF20651">
    <property type="entry name" value="EXOC6_Sec15_N"/>
    <property type="match status" value="1"/>
</dbReference>
<dbReference type="Pfam" id="PF04091">
    <property type="entry name" value="Sec15_C"/>
    <property type="match status" value="1"/>
</dbReference>
<dbReference type="PIRSF" id="PIRSF025007">
    <property type="entry name" value="Sec15"/>
    <property type="match status" value="1"/>
</dbReference>
<feature type="chain" id="PRO_0000118953" description="Exocyst complex component 6">
    <location>
        <begin position="1"/>
        <end position="804"/>
    </location>
</feature>
<reference key="1">
    <citation type="journal article" date="1997" name="Proc. Natl. Acad. Sci. U.S.A.">
        <title>Subunit structure of the mammalian exocyst complex.</title>
        <authorList>
            <person name="Kee Y."/>
            <person name="Yoo J.-S."/>
            <person name="Hazuka C.D."/>
            <person name="Peterson K.E."/>
            <person name="Hsu S.-C."/>
            <person name="Scheller R.H."/>
        </authorList>
    </citation>
    <scope>NUCLEOTIDE SEQUENCE [MRNA]</scope>
    <source>
        <tissue>Brain</tissue>
    </source>
</reference>
<reference key="2">
    <citation type="journal article" date="2003" name="Hybrid. Hybridomics">
        <title>Immunological characterization of exocyst complex subunits in cell differentiation.</title>
        <authorList>
            <person name="Wang S."/>
            <person name="Hsu S.C."/>
        </authorList>
    </citation>
    <scope>INTERACTION WITH EXOC8</scope>
    <scope>SUBCELLULAR LOCATION</scope>
</reference>
<reference key="3">
    <citation type="journal article" date="2010" name="Nat. Cell Biol.">
        <title>A molecular network for de novo generation of the apical surface and lumen.</title>
        <authorList>
            <person name="Bryant D.M."/>
            <person name="Datta A."/>
            <person name="Rodriguez-Fraticelli A.E."/>
            <person name="Peraenen J."/>
            <person name="Martin-Belmonte F."/>
            <person name="Mostov K.E."/>
        </authorList>
    </citation>
    <scope>FUNCTION</scope>
</reference>
<proteinExistence type="evidence at protein level"/>
<gene>
    <name type="primary">Exoc6</name>
    <name type="synonym">Sec15</name>
    <name type="synonym">Sec15a</name>
    <name type="synonym">Sec15l1</name>
</gene>
<organism>
    <name type="scientific">Rattus norvegicus</name>
    <name type="common">Rat</name>
    <dbReference type="NCBI Taxonomy" id="10116"/>
    <lineage>
        <taxon>Eukaryota</taxon>
        <taxon>Metazoa</taxon>
        <taxon>Chordata</taxon>
        <taxon>Craniata</taxon>
        <taxon>Vertebrata</taxon>
        <taxon>Euteleostomi</taxon>
        <taxon>Mammalia</taxon>
        <taxon>Eutheria</taxon>
        <taxon>Euarchontoglires</taxon>
        <taxon>Glires</taxon>
        <taxon>Rodentia</taxon>
        <taxon>Myomorpha</taxon>
        <taxon>Muroidea</taxon>
        <taxon>Muridae</taxon>
        <taxon>Murinae</taxon>
        <taxon>Rattus</taxon>
    </lineage>
</organism>
<name>EXOC6_RAT</name>
<comment type="function">
    <text evidence="4">Component of the exocyst complex involved in the docking of exocytic vesicles with fusion sites on the plasma membrane. Together with RAB11A, RAB3IP, RAB8A, PARD3, PRKCI, ANXA2, CDC42 and DNMBP promotes transcytosis of PODXL to the apical membrane initiation sites (AMIS), apical surface formation and lumenogenesis.</text>
</comment>
<comment type="subunit">
    <text evidence="1 3">The exocyst complex is composed of EXOC1, EXOC2, EXOC3, EXOC4, EXOC5, EXOC6, EXOC7 and EXOC8 (PubMed:12954101). Interacts with CNTRL (By similarity). Interacts with RAB11A in a GTP-dependent manner (By similarity).</text>
</comment>
<comment type="subcellular location">
    <subcellularLocation>
        <location evidence="3">Cytoplasm</location>
    </subcellularLocation>
    <subcellularLocation>
        <location evidence="3">Cytoplasm</location>
        <location evidence="3">Perinuclear region</location>
    </subcellularLocation>
    <subcellularLocation>
        <location evidence="3">Cell projection</location>
        <location evidence="3">Growth cone</location>
    </subcellularLocation>
    <subcellularLocation>
        <location evidence="2">Midbody</location>
        <location evidence="2">Midbody ring</location>
    </subcellularLocation>
    <text evidence="2 3">Perinuclear in undifferentiated cells. Redistributes to growing neurites and growth cones during neuronal differentiation (PubMed:12954101). Colocalizes with CNTRL/centriolin at the midbody ring (By similarity).</text>
</comment>
<comment type="similarity">
    <text evidence="5">Belongs to the SEC15 family.</text>
</comment>
<comment type="sequence caution" evidence="5">
    <conflict type="erroneous initiation">
        <sequence resource="EMBL-CDS" id="AAC01580"/>
    </conflict>
</comment>
<sequence length="804" mass="93178">MAESGEALGTVPEHERILQEIESTDTACVGPTLRSVYDGQPNAHKKFMEKLDACIRNHDKEIEKMCNFHHQGFVDAITELLKVRADAEKLKVQVTDTNRRFQDAGKEVIEQTEDIIRCRIQQRNITTVVEKLQLCLPVLEMYSKLKEQMSMQRYYSALKTMEQLENVYFPRVSQYRFCQLMMDTLPKLREDIKDISMSDLKDFLESIRKHSDKIGETAMKQAQQQKSFSIAVQKQTNMRFGKNMHVNNDRTLEEKSDIILKHTLEEEAENDEEVLTVQDLVDFSPVYRCSHIYSALGDEETFENYYRKQRKKQARLVLQPQSSVHETVDGYRRYFTQIVGFFVVEDHILHVTQGLVTRAYTDELWNMALSKIIAVLRAHSSYCTDPDLVLELKNLIVIFADTLQGYGFSVNRLFDLLFEIRDQYNETLLKKWAGIFRDIFEEDNYSPIPIGSEEEYKMVISKFPFQDPDLEKQSFPKKFPMSQSVPLIYIQVKEFIYASLKFSESLHRSSTEIDDMLRKSTNLLLTRILSSCLLNLIRKPHIGLTELVQIIINTTHLEQACKYLEDFITNITNISQETVHTTRLYGLSTFKDARHAAEGEIYTKLNQKIDEFVQLADYDWTMAESDGRASGYLMDLINFLRSIFQVFTHLPGKVAQTACMSACQHLSTSLMQMLLDSELKQISMGAVQQFNLDVIQCELFASSEPVPGFQGDTLQLAFIDLRQLLDLFMVWDWSTYLADYGQPASKYLRVNPHAALTLLEKMKDTSKKNNIFAQFRKNDRDRQKLIETVVKQLRGLVTGMSQHM</sequence>
<protein>
    <recommendedName>
        <fullName>Exocyst complex component 6</fullName>
    </recommendedName>
    <alternativeName>
        <fullName>Exocyst complex component Sec15A</fullName>
    </alternativeName>
    <alternativeName>
        <fullName>SEC15-like protein 1</fullName>
        <shortName>rSec15</shortName>
    </alternativeName>
</protein>
<evidence type="ECO:0000250" key="1"/>
<evidence type="ECO:0000250" key="2">
    <source>
        <dbReference type="UniProtKB" id="Q8TAG9"/>
    </source>
</evidence>
<evidence type="ECO:0000269" key="3">
    <source>
    </source>
</evidence>
<evidence type="ECO:0000269" key="4">
    <source>
    </source>
</evidence>
<evidence type="ECO:0000305" key="5"/>
<keyword id="KW-0966">Cell projection</keyword>
<keyword id="KW-0963">Cytoplasm</keyword>
<keyword id="KW-0268">Exocytosis</keyword>
<keyword id="KW-0653">Protein transport</keyword>
<keyword id="KW-1185">Reference proteome</keyword>
<keyword id="KW-0813">Transport</keyword>
<accession>O54923</accession>